<name>DDRGK_TRIAD</name>
<reference key="1">
    <citation type="journal article" date="2008" name="Nature">
        <title>The Trichoplax genome and the nature of placozoans.</title>
        <authorList>
            <person name="Srivastava M."/>
            <person name="Begovic E."/>
            <person name="Chapman J."/>
            <person name="Putnam N.H."/>
            <person name="Hellsten U."/>
            <person name="Kawashima T."/>
            <person name="Kuo A."/>
            <person name="Mitros T."/>
            <person name="Salamov A."/>
            <person name="Carpenter M.L."/>
            <person name="Signorovitch A.Y."/>
            <person name="Moreno M.A."/>
            <person name="Kamm K."/>
            <person name="Grimwood J."/>
            <person name="Schmutz J."/>
            <person name="Shapiro H."/>
            <person name="Grigoriev I.V."/>
            <person name="Buss L.W."/>
            <person name="Schierwater B."/>
            <person name="Dellaporta S.L."/>
            <person name="Rokhsar D.S."/>
        </authorList>
    </citation>
    <scope>NUCLEOTIDE SEQUENCE [LARGE SCALE GENOMIC DNA]</scope>
    <source>
        <strain>Grell-BS-1999</strain>
    </source>
</reference>
<protein>
    <recommendedName>
        <fullName>DDRGK domain-containing protein 1</fullName>
    </recommendedName>
</protein>
<proteinExistence type="inferred from homology"/>
<organism>
    <name type="scientific">Trichoplax adhaerens</name>
    <name type="common">Trichoplax reptans</name>
    <dbReference type="NCBI Taxonomy" id="10228"/>
    <lineage>
        <taxon>Eukaryota</taxon>
        <taxon>Metazoa</taxon>
        <taxon>Placozoa</taxon>
        <taxon>Uniplacotomia</taxon>
        <taxon>Trichoplacea</taxon>
        <taxon>Trichoplacidae</taxon>
        <taxon>Trichoplax</taxon>
    </lineage>
</organism>
<comment type="function">
    <text evidence="1">Substrate adapter for ufmylation, the covalent attachment of the ubiquitin-like modifier UFM1 to substrate proteins.</text>
</comment>
<comment type="subcellular location">
    <subcellularLocation>
        <location evidence="1">Endoplasmic reticulum membrane</location>
        <topology evidence="1">Single-pass membrane protein</topology>
    </subcellularLocation>
</comment>
<comment type="similarity">
    <text evidence="4">Belongs to the DDRGK1 family.</text>
</comment>
<accession>B3S3D5</accession>
<dbReference type="EMBL" id="DS985248">
    <property type="protein sequence ID" value="EDV22950.1"/>
    <property type="molecule type" value="Genomic_DNA"/>
</dbReference>
<dbReference type="RefSeq" id="XP_002114816.1">
    <property type="nucleotide sequence ID" value="XM_002114780.1"/>
</dbReference>
<dbReference type="SMR" id="B3S3D5"/>
<dbReference type="FunCoup" id="B3S3D5">
    <property type="interactions" value="439"/>
</dbReference>
<dbReference type="STRING" id="10228.B3S3D5"/>
<dbReference type="EnsemblMetazoa" id="TriadT58679">
    <property type="protein sequence ID" value="TriadP58679"/>
    <property type="gene ID" value="TriadG58679"/>
</dbReference>
<dbReference type="GeneID" id="6755851"/>
<dbReference type="KEGG" id="tad:TRIADDRAFT_58679"/>
<dbReference type="CTD" id="6755851"/>
<dbReference type="eggNOG" id="KOG3054">
    <property type="taxonomic scope" value="Eukaryota"/>
</dbReference>
<dbReference type="HOGENOM" id="CLU_059562_1_0_1"/>
<dbReference type="InParanoid" id="B3S3D5"/>
<dbReference type="OMA" id="EYYNEDM"/>
<dbReference type="OrthoDB" id="2285710at2759"/>
<dbReference type="PhylomeDB" id="B3S3D5"/>
<dbReference type="Proteomes" id="UP000009022">
    <property type="component" value="Unassembled WGS sequence"/>
</dbReference>
<dbReference type="GO" id="GO:0005789">
    <property type="term" value="C:endoplasmic reticulum membrane"/>
    <property type="evidence" value="ECO:0007669"/>
    <property type="project" value="UniProtKB-SubCell"/>
</dbReference>
<dbReference type="GO" id="GO:0044389">
    <property type="term" value="F:ubiquitin-like protein ligase binding"/>
    <property type="evidence" value="ECO:0000318"/>
    <property type="project" value="GO_Central"/>
</dbReference>
<dbReference type="FunFam" id="1.10.10.10:FF:000143">
    <property type="entry name" value="DDRGK domain-containing protein 1"/>
    <property type="match status" value="1"/>
</dbReference>
<dbReference type="Gene3D" id="1.10.10.10">
    <property type="entry name" value="Winged helix-like DNA-binding domain superfamily/Winged helix DNA-binding domain"/>
    <property type="match status" value="1"/>
</dbReference>
<dbReference type="InterPro" id="IPR019153">
    <property type="entry name" value="DDRGK_dom-contain"/>
</dbReference>
<dbReference type="InterPro" id="IPR050899">
    <property type="entry name" value="DDRGK_domain-containing"/>
</dbReference>
<dbReference type="InterPro" id="IPR036388">
    <property type="entry name" value="WH-like_DNA-bd_sf"/>
</dbReference>
<dbReference type="InterPro" id="IPR036390">
    <property type="entry name" value="WH_DNA-bd_sf"/>
</dbReference>
<dbReference type="PANTHER" id="PTHR48176">
    <property type="entry name" value="DDRGK DOMAIN-CONTAINING PROTEIN 1"/>
    <property type="match status" value="1"/>
</dbReference>
<dbReference type="PANTHER" id="PTHR48176:SF1">
    <property type="entry name" value="DDRGK DOMAIN-CONTAINING PROTEIN 1"/>
    <property type="match status" value="1"/>
</dbReference>
<dbReference type="Pfam" id="PF09756">
    <property type="entry name" value="DDRGK"/>
    <property type="match status" value="1"/>
</dbReference>
<dbReference type="SMART" id="SM01128">
    <property type="entry name" value="DDRGK"/>
    <property type="match status" value="1"/>
</dbReference>
<dbReference type="SUPFAM" id="SSF46785">
    <property type="entry name" value="Winged helix' DNA-binding domain"/>
    <property type="match status" value="1"/>
</dbReference>
<keyword id="KW-0256">Endoplasmic reticulum</keyword>
<keyword id="KW-0472">Membrane</keyword>
<keyword id="KW-1185">Reference proteome</keyword>
<keyword id="KW-0812">Transmembrane</keyword>
<keyword id="KW-1133">Transmembrane helix</keyword>
<keyword id="KW-0833">Ubl conjugation pathway</keyword>
<feature type="chain" id="PRO_0000391872" description="DDRGK domain-containing protein 1">
    <location>
        <begin position="1"/>
        <end position="310"/>
    </location>
</feature>
<feature type="transmembrane region" description="Helical" evidence="2">
    <location>
        <begin position="1"/>
        <end position="21"/>
    </location>
</feature>
<feature type="topological domain" description="Cytoplasmic" evidence="4">
    <location>
        <begin position="22"/>
        <end position="310"/>
    </location>
</feature>
<feature type="region of interest" description="Disordered" evidence="3">
    <location>
        <begin position="38"/>
        <end position="85"/>
    </location>
</feature>
<feature type="region of interest" description="Disordered" evidence="3">
    <location>
        <begin position="110"/>
        <end position="162"/>
    </location>
</feature>
<feature type="compositionally biased region" description="Basic residues" evidence="3">
    <location>
        <begin position="52"/>
        <end position="70"/>
    </location>
</feature>
<feature type="compositionally biased region" description="Acidic residues" evidence="3">
    <location>
        <begin position="76"/>
        <end position="85"/>
    </location>
</feature>
<evidence type="ECO:0000250" key="1">
    <source>
        <dbReference type="UniProtKB" id="Q96HY6"/>
    </source>
</evidence>
<evidence type="ECO:0000255" key="2"/>
<evidence type="ECO:0000256" key="3">
    <source>
        <dbReference type="SAM" id="MobiDB-lite"/>
    </source>
</evidence>
<evidence type="ECO:0000305" key="4"/>
<sequence>MAAIIYLAIAAVASILLFVAVKLLSTDTKTEIRTDDDVGELIGRENPVPQRPRARARRGLRNKTNRSKTQRQHDNDYDDYDDEYQDDGFLEEPVYDRKMGTKKLRKLEEKAEKKAMREQMEAEREDKINRQELREQNRRKEEERKAKEREEKEEAERKLKEEQEKREYEEYLRLKESFSVENEGSGEAEIAQESQSLLQEFIDYIKNNKVVLLEDVAAHFKLRTEDVINRIQTLQSMDRLTGVVDDRGKYIYISVEELNAIAKFIKQRGRVSISELAESSNSLINLQSDSKASHTIESVNDSPAEISVNA</sequence>
<gene>
    <name type="ORF">TRIADDRAFT_58679</name>
</gene>